<accession>B5XTR0</accession>
<dbReference type="EC" id="2.4.1.21" evidence="1"/>
<dbReference type="EMBL" id="CP000964">
    <property type="protein sequence ID" value="ACI07338.1"/>
    <property type="molecule type" value="Genomic_DNA"/>
</dbReference>
<dbReference type="SMR" id="B5XTR0"/>
<dbReference type="CAZy" id="GT5">
    <property type="family name" value="Glycosyltransferase Family 5"/>
</dbReference>
<dbReference type="KEGG" id="kpe:KPK_0319"/>
<dbReference type="HOGENOM" id="CLU_009583_18_2_6"/>
<dbReference type="UniPathway" id="UPA00164"/>
<dbReference type="Proteomes" id="UP000001734">
    <property type="component" value="Chromosome"/>
</dbReference>
<dbReference type="GO" id="GO:0005829">
    <property type="term" value="C:cytosol"/>
    <property type="evidence" value="ECO:0007669"/>
    <property type="project" value="TreeGrafter"/>
</dbReference>
<dbReference type="GO" id="GO:0009011">
    <property type="term" value="F:alpha-1,4-glucan glucosyltransferase (ADP-glucose donor) activity"/>
    <property type="evidence" value="ECO:0007669"/>
    <property type="project" value="UniProtKB-UniRule"/>
</dbReference>
<dbReference type="GO" id="GO:0004373">
    <property type="term" value="F:alpha-1,4-glucan glucosyltransferase (UDP-glucose donor) activity"/>
    <property type="evidence" value="ECO:0007669"/>
    <property type="project" value="InterPro"/>
</dbReference>
<dbReference type="GO" id="GO:0005978">
    <property type="term" value="P:glycogen biosynthetic process"/>
    <property type="evidence" value="ECO:0007669"/>
    <property type="project" value="UniProtKB-UniRule"/>
</dbReference>
<dbReference type="CDD" id="cd03791">
    <property type="entry name" value="GT5_Glycogen_synthase_DULL1-like"/>
    <property type="match status" value="1"/>
</dbReference>
<dbReference type="FunFam" id="3.40.50.2000:FF:000008">
    <property type="entry name" value="Glycogen synthase"/>
    <property type="match status" value="1"/>
</dbReference>
<dbReference type="FunFam" id="3.40.50.2000:FF:000011">
    <property type="entry name" value="Glycogen synthase"/>
    <property type="match status" value="1"/>
</dbReference>
<dbReference type="Gene3D" id="3.40.50.2000">
    <property type="entry name" value="Glycogen Phosphorylase B"/>
    <property type="match status" value="2"/>
</dbReference>
<dbReference type="HAMAP" id="MF_00484">
    <property type="entry name" value="Glycogen_synth"/>
    <property type="match status" value="1"/>
</dbReference>
<dbReference type="InterPro" id="IPR001296">
    <property type="entry name" value="Glyco_trans_1"/>
</dbReference>
<dbReference type="InterPro" id="IPR011835">
    <property type="entry name" value="GS/SS"/>
</dbReference>
<dbReference type="InterPro" id="IPR013534">
    <property type="entry name" value="Starch_synth_cat_dom"/>
</dbReference>
<dbReference type="NCBIfam" id="TIGR02095">
    <property type="entry name" value="glgA"/>
    <property type="match status" value="1"/>
</dbReference>
<dbReference type="NCBIfam" id="NF001899">
    <property type="entry name" value="PRK00654.1-2"/>
    <property type="match status" value="1"/>
</dbReference>
<dbReference type="PANTHER" id="PTHR45825:SF11">
    <property type="entry name" value="ALPHA AMYLASE DOMAIN-CONTAINING PROTEIN"/>
    <property type="match status" value="1"/>
</dbReference>
<dbReference type="PANTHER" id="PTHR45825">
    <property type="entry name" value="GRANULE-BOUND STARCH SYNTHASE 1, CHLOROPLASTIC/AMYLOPLASTIC"/>
    <property type="match status" value="1"/>
</dbReference>
<dbReference type="Pfam" id="PF08323">
    <property type="entry name" value="Glyco_transf_5"/>
    <property type="match status" value="1"/>
</dbReference>
<dbReference type="Pfam" id="PF00534">
    <property type="entry name" value="Glycos_transf_1"/>
    <property type="match status" value="1"/>
</dbReference>
<dbReference type="SUPFAM" id="SSF53756">
    <property type="entry name" value="UDP-Glycosyltransferase/glycogen phosphorylase"/>
    <property type="match status" value="1"/>
</dbReference>
<sequence>MQVLHVCSEMFPLLKTGGLADVIGALPAAQIAEGIDTRVLLPAFPDIRRGVVDAQVVTRRDTFAGRITLLYGHFNGVGIYLIDAPHLYDRPGSPYHDTNQHAYTDNVLRFALLGWVGSEMASGLDPFWRPDVVHAHDWHAGLTPAYLAARGRPAKSVFTVHNLAYQGMFYSWHMNDIELPWSFYNMHGLEFNGQISFLKAGLYYADHITAVSPTYAREITEPQYAYGMEGLLRQRHHEGRLSGILNGVDDGIWSPQNDLLLPMRYDRDTLEEKAENKRQLQIAMGLKVDDKAPLFAVVSRLTSQKGLDLVLEALPGLLEQGGQLALLGAGDPVLQEGFLAAAAEHPGKVGVQIGYHEAFSHRIMGGADVILVPSRFEPCGLTQLYGLKYGTLPLVRRTGGLADTVSDSSLENLADGLATGFVFEDSNALSLLRAIRRAFVLWSRPSLWRYVQRQAMNMDFSWQVAANSYRELYQRLM</sequence>
<proteinExistence type="inferred from homology"/>
<organism>
    <name type="scientific">Klebsiella pneumoniae (strain 342)</name>
    <dbReference type="NCBI Taxonomy" id="507522"/>
    <lineage>
        <taxon>Bacteria</taxon>
        <taxon>Pseudomonadati</taxon>
        <taxon>Pseudomonadota</taxon>
        <taxon>Gammaproteobacteria</taxon>
        <taxon>Enterobacterales</taxon>
        <taxon>Enterobacteriaceae</taxon>
        <taxon>Klebsiella/Raoultella group</taxon>
        <taxon>Klebsiella</taxon>
        <taxon>Klebsiella pneumoniae complex</taxon>
    </lineage>
</organism>
<keyword id="KW-0320">Glycogen biosynthesis</keyword>
<keyword id="KW-0328">Glycosyltransferase</keyword>
<keyword id="KW-0808">Transferase</keyword>
<gene>
    <name evidence="1" type="primary">glgA</name>
    <name type="ordered locus">KPK_0319</name>
</gene>
<feature type="chain" id="PRO_1000126081" description="Glycogen synthase">
    <location>
        <begin position="1"/>
        <end position="477"/>
    </location>
</feature>
<feature type="binding site" evidence="1">
    <location>
        <position position="15"/>
    </location>
    <ligand>
        <name>ADP-alpha-D-glucose</name>
        <dbReference type="ChEBI" id="CHEBI:57498"/>
    </ligand>
</feature>
<name>GLGA_KLEP3</name>
<protein>
    <recommendedName>
        <fullName evidence="1">Glycogen synthase</fullName>
        <ecNumber evidence="1">2.4.1.21</ecNumber>
    </recommendedName>
    <alternativeName>
        <fullName evidence="1">Starch [bacterial glycogen] synthase</fullName>
    </alternativeName>
</protein>
<evidence type="ECO:0000255" key="1">
    <source>
        <dbReference type="HAMAP-Rule" id="MF_00484"/>
    </source>
</evidence>
<reference key="1">
    <citation type="journal article" date="2008" name="PLoS Genet.">
        <title>Complete genome sequence of the N2-fixing broad host range endophyte Klebsiella pneumoniae 342 and virulence predictions verified in mice.</title>
        <authorList>
            <person name="Fouts D.E."/>
            <person name="Tyler H.L."/>
            <person name="DeBoy R.T."/>
            <person name="Daugherty S."/>
            <person name="Ren Q."/>
            <person name="Badger J.H."/>
            <person name="Durkin A.S."/>
            <person name="Huot H."/>
            <person name="Shrivastava S."/>
            <person name="Kothari S."/>
            <person name="Dodson R.J."/>
            <person name="Mohamoud Y."/>
            <person name="Khouri H."/>
            <person name="Roesch L.F.W."/>
            <person name="Krogfelt K.A."/>
            <person name="Struve C."/>
            <person name="Triplett E.W."/>
            <person name="Methe B.A."/>
        </authorList>
    </citation>
    <scope>NUCLEOTIDE SEQUENCE [LARGE SCALE GENOMIC DNA]</scope>
    <source>
        <strain>342</strain>
    </source>
</reference>
<comment type="function">
    <text evidence="1">Synthesizes alpha-1,4-glucan chains using ADP-glucose.</text>
</comment>
<comment type="catalytic activity">
    <reaction evidence="1">
        <text>[(1-&gt;4)-alpha-D-glucosyl](n) + ADP-alpha-D-glucose = [(1-&gt;4)-alpha-D-glucosyl](n+1) + ADP + H(+)</text>
        <dbReference type="Rhea" id="RHEA:18189"/>
        <dbReference type="Rhea" id="RHEA-COMP:9584"/>
        <dbReference type="Rhea" id="RHEA-COMP:9587"/>
        <dbReference type="ChEBI" id="CHEBI:15378"/>
        <dbReference type="ChEBI" id="CHEBI:15444"/>
        <dbReference type="ChEBI" id="CHEBI:57498"/>
        <dbReference type="ChEBI" id="CHEBI:456216"/>
        <dbReference type="EC" id="2.4.1.21"/>
    </reaction>
</comment>
<comment type="pathway">
    <text evidence="1">Glycan biosynthesis; glycogen biosynthesis.</text>
</comment>
<comment type="similarity">
    <text evidence="1">Belongs to the glycosyltransferase 1 family. Bacterial/plant glycogen synthase subfamily.</text>
</comment>